<accession>C0HLX5</accession>
<feature type="chain" id="PRO_0000453948" description="Septenin 2c">
    <location>
        <begin position="1"/>
        <end position="23"/>
    </location>
</feature>
<feature type="unsure residue" description="L or I" evidence="1">
    <location>
        <position position="1"/>
    </location>
</feature>
<feature type="unsure residue" description="L or I" evidence="1">
    <location>
        <position position="2"/>
    </location>
</feature>
<feature type="unsure residue" description="L or I" evidence="1">
    <location>
        <position position="6"/>
    </location>
</feature>
<feature type="unsure residue" description="L or I" evidence="1">
    <location>
        <position position="10"/>
    </location>
</feature>
<feature type="unsure residue" description="L or I" evidence="1">
    <location>
        <position position="16"/>
    </location>
</feature>
<feature type="unsure residue" description="L or I" evidence="1">
    <location>
        <position position="20"/>
    </location>
</feature>
<feature type="unsure residue" description="L or I" evidence="1">
    <location>
        <position position="22"/>
    </location>
</feature>
<feature type="unsure residue" description="L or I" evidence="1">
    <location>
        <position position="23"/>
    </location>
</feature>
<proteinExistence type="evidence at protein level"/>
<keyword id="KW-0903">Direct protein sequencing</keyword>
<keyword id="KW-0964">Secreted</keyword>
<dbReference type="GO" id="GO:0005576">
    <property type="term" value="C:extracellular region"/>
    <property type="evidence" value="ECO:0007669"/>
    <property type="project" value="UniProtKB-SubCell"/>
</dbReference>
<reference evidence="3" key="1">
    <citation type="journal article" date="2021" name="Rapid Commun. Mass Spectrom.">
        <title>Manual mass spectrometry de novo sequencing of the anionic host defense peptides of the Cuban Treefrog Osteopilus septentrionalis.</title>
        <authorList>
            <person name="Samgina T.Y."/>
            <person name="Tolpina M.D."/>
            <person name="Surin A.K."/>
            <person name="Kovalev S.V."/>
            <person name="Bosch R.A."/>
            <person name="Alonso I.P."/>
            <person name="Garcia F.A."/>
            <person name="Gonzalez Lopez L.J."/>
            <person name="Lebedev A.T."/>
        </authorList>
    </citation>
    <scope>PROTEIN SEQUENCE</scope>
    <scope>MASS SPECTROMETRY</scope>
</reference>
<evidence type="ECO:0000269" key="1">
    <source>
    </source>
</evidence>
<evidence type="ECO:0000303" key="2">
    <source>
    </source>
</evidence>
<evidence type="ECO:0000305" key="3"/>
<evidence type="ECO:0000305" key="4">
    <source>
    </source>
</evidence>
<comment type="function">
    <text evidence="2">May act as an antimicrobial peptide.</text>
</comment>
<comment type="subcellular location">
    <subcellularLocation>
        <location evidence="1">Secreted</location>
    </subcellularLocation>
</comment>
<comment type="tissue specificity">
    <text evidence="4">Expressed in skin granular glands.</text>
</comment>
<comment type="mass spectrometry"/>
<comment type="similarity">
    <text evidence="3">Belongs to the Frog skin active peptide (FSAP) family. Septenin subfamily.</text>
</comment>
<protein>
    <recommendedName>
        <fullName evidence="2">Septenin 2c</fullName>
    </recommendedName>
</protein>
<name>SEP2C_OSTSE</name>
<organism>
    <name type="scientific">Osteopilus septentrionalis</name>
    <name type="common">Cuban treefrog</name>
    <dbReference type="NCBI Taxonomy" id="317373"/>
    <lineage>
        <taxon>Eukaryota</taxon>
        <taxon>Metazoa</taxon>
        <taxon>Chordata</taxon>
        <taxon>Craniata</taxon>
        <taxon>Vertebrata</taxon>
        <taxon>Euteleostomi</taxon>
        <taxon>Amphibia</taxon>
        <taxon>Batrachia</taxon>
        <taxon>Anura</taxon>
        <taxon>Neobatrachia</taxon>
        <taxon>Hyloidea</taxon>
        <taxon>Hylidae</taxon>
        <taxon>Hylinae</taxon>
        <taxon>Lophiohylini</taxon>
        <taxon>Osteopilus</taxon>
    </lineage>
</organism>
<sequence>IIGDTINGAITTADNIVGRIGII</sequence>